<dbReference type="EMBL" id="AAFI02000085">
    <property type="protein sequence ID" value="EAL64290.2"/>
    <property type="molecule type" value="Genomic_DNA"/>
</dbReference>
<dbReference type="RefSeq" id="XP_637796.2">
    <property type="nucleotide sequence ID" value="XM_632704.2"/>
</dbReference>
<dbReference type="FunCoup" id="Q54M35">
    <property type="interactions" value="641"/>
</dbReference>
<dbReference type="STRING" id="44689.Q54M35"/>
<dbReference type="PaxDb" id="44689-DDB0266414"/>
<dbReference type="ABCD" id="Q54M35">
    <property type="antibodies" value="12 sequenced antibodies"/>
</dbReference>
<dbReference type="EnsemblProtists" id="EAL64290">
    <property type="protein sequence ID" value="EAL64290"/>
    <property type="gene ID" value="DDB_G0286229"/>
</dbReference>
<dbReference type="GeneID" id="8625510"/>
<dbReference type="KEGG" id="ddi:DDB_G0286229"/>
<dbReference type="dictyBase" id="DDB_G0286229">
    <property type="gene designation" value="alyL"/>
</dbReference>
<dbReference type="VEuPathDB" id="AmoebaDB:DDB_G0286229"/>
<dbReference type="eggNOG" id="ENOG502R6WX">
    <property type="taxonomic scope" value="Eukaryota"/>
</dbReference>
<dbReference type="HOGENOM" id="CLU_476878_0_0_1"/>
<dbReference type="InParanoid" id="Q54M35"/>
<dbReference type="OMA" id="FKIRCKK"/>
<dbReference type="PRO" id="PR:Q54M35"/>
<dbReference type="Proteomes" id="UP000002195">
    <property type="component" value="Chromosome 4"/>
</dbReference>
<dbReference type="GO" id="GO:0003796">
    <property type="term" value="F:lysozyme activity"/>
    <property type="evidence" value="ECO:0000314"/>
    <property type="project" value="dictyBase"/>
</dbReference>
<dbReference type="GO" id="GO:0006935">
    <property type="term" value="P:chemotaxis"/>
    <property type="evidence" value="ECO:0000318"/>
    <property type="project" value="GO_Central"/>
</dbReference>
<dbReference type="GO" id="GO:0050829">
    <property type="term" value="P:defense response to Gram-negative bacterium"/>
    <property type="evidence" value="ECO:0000315"/>
    <property type="project" value="dictyBase"/>
</dbReference>
<dbReference type="GO" id="GO:0031640">
    <property type="term" value="P:killing of cells of another organism"/>
    <property type="evidence" value="ECO:0000314"/>
    <property type="project" value="dictyBase"/>
</dbReference>
<dbReference type="PANTHER" id="PTHR32089:SF112">
    <property type="entry name" value="LYSOZYME-LIKE PROTEIN-RELATED"/>
    <property type="match status" value="1"/>
</dbReference>
<dbReference type="PANTHER" id="PTHR32089">
    <property type="entry name" value="METHYL-ACCEPTING CHEMOTAXIS PROTEIN MCPB"/>
    <property type="match status" value="1"/>
</dbReference>
<name>LYSL_DICDI</name>
<accession>Q54M35</accession>
<sequence>MRLLLVLLALIFSVVSAQQNTCAQLCKDNKDMCCSLSKNSEYLLTTHNKEEKTQSCGDKFNSEDYYVAGSNRFGCGNSVTICKVQSDDSKIEITPNRRFGHHGGGVAGSIANAASSISSVANSVSSMTNSVSSLANSVSSLAGSMSSSGSSSSSGSSGSSSSSSGSSGGGSSGGGSGGGGGGSGLVVGKERRFGKHGGGGIAGSMNSAATSLSSLASDVSSVASVVSSLSSSSSADAGSSGAQGSGSTSGDGNAPPGSTGGTGGSSGSSGGGSGGGGGGSGLVVGERKFGHHGGGGVAGSIANAASSIASVANSVSSMTNSVSSLANSVSSLAGSMSSSGSSSSSGSSGSSSSSSSSGSSGGSSGGGSSGGGSGGGGGGSGLVVGERKFGHHGGGGVAGSIANAASSIASVANSVSSMTNSVSSLANSVSSLAGSSSSSGSSGSSSSSSSSGSSGGSSGGSSGGGGGSGELLSQNQVFATCVRVISTNVGPNVDIEDKIGKPIMDASTKVCEDLFGSPYCQWTDNHIVTAVSSKLDDGFPTQGAFNVTRSQYGYIMENGHYLNNKGNSVRIN</sequence>
<comment type="similarity">
    <text evidence="3">Belongs to the dictyostelium lysozyme family.</text>
</comment>
<evidence type="ECO:0000255" key="1"/>
<evidence type="ECO:0000256" key="2">
    <source>
        <dbReference type="SAM" id="MobiDB-lite"/>
    </source>
</evidence>
<evidence type="ECO:0000305" key="3"/>
<organism>
    <name type="scientific">Dictyostelium discoideum</name>
    <name type="common">Social amoeba</name>
    <dbReference type="NCBI Taxonomy" id="44689"/>
    <lineage>
        <taxon>Eukaryota</taxon>
        <taxon>Amoebozoa</taxon>
        <taxon>Evosea</taxon>
        <taxon>Eumycetozoa</taxon>
        <taxon>Dictyostelia</taxon>
        <taxon>Dictyosteliales</taxon>
        <taxon>Dictyosteliaceae</taxon>
        <taxon>Dictyostelium</taxon>
    </lineage>
</organism>
<keyword id="KW-1185">Reference proteome</keyword>
<keyword id="KW-0732">Signal</keyword>
<reference key="1">
    <citation type="journal article" date="2005" name="Nature">
        <title>The genome of the social amoeba Dictyostelium discoideum.</title>
        <authorList>
            <person name="Eichinger L."/>
            <person name="Pachebat J.A."/>
            <person name="Gloeckner G."/>
            <person name="Rajandream M.A."/>
            <person name="Sucgang R."/>
            <person name="Berriman M."/>
            <person name="Song J."/>
            <person name="Olsen R."/>
            <person name="Szafranski K."/>
            <person name="Xu Q."/>
            <person name="Tunggal B."/>
            <person name="Kummerfeld S."/>
            <person name="Madera M."/>
            <person name="Konfortov B.A."/>
            <person name="Rivero F."/>
            <person name="Bankier A.T."/>
            <person name="Lehmann R."/>
            <person name="Hamlin N."/>
            <person name="Davies R."/>
            <person name="Gaudet P."/>
            <person name="Fey P."/>
            <person name="Pilcher K."/>
            <person name="Chen G."/>
            <person name="Saunders D."/>
            <person name="Sodergren E.J."/>
            <person name="Davis P."/>
            <person name="Kerhornou A."/>
            <person name="Nie X."/>
            <person name="Hall N."/>
            <person name="Anjard C."/>
            <person name="Hemphill L."/>
            <person name="Bason N."/>
            <person name="Farbrother P."/>
            <person name="Desany B."/>
            <person name="Just E."/>
            <person name="Morio T."/>
            <person name="Rost R."/>
            <person name="Churcher C.M."/>
            <person name="Cooper J."/>
            <person name="Haydock S."/>
            <person name="van Driessche N."/>
            <person name="Cronin A."/>
            <person name="Goodhead I."/>
            <person name="Muzny D.M."/>
            <person name="Mourier T."/>
            <person name="Pain A."/>
            <person name="Lu M."/>
            <person name="Harper D."/>
            <person name="Lindsay R."/>
            <person name="Hauser H."/>
            <person name="James K.D."/>
            <person name="Quiles M."/>
            <person name="Madan Babu M."/>
            <person name="Saito T."/>
            <person name="Buchrieser C."/>
            <person name="Wardroper A."/>
            <person name="Felder M."/>
            <person name="Thangavelu M."/>
            <person name="Johnson D."/>
            <person name="Knights A."/>
            <person name="Loulseged H."/>
            <person name="Mungall K.L."/>
            <person name="Oliver K."/>
            <person name="Price C."/>
            <person name="Quail M.A."/>
            <person name="Urushihara H."/>
            <person name="Hernandez J."/>
            <person name="Rabbinowitsch E."/>
            <person name="Steffen D."/>
            <person name="Sanders M."/>
            <person name="Ma J."/>
            <person name="Kohara Y."/>
            <person name="Sharp S."/>
            <person name="Simmonds M.N."/>
            <person name="Spiegler S."/>
            <person name="Tivey A."/>
            <person name="Sugano S."/>
            <person name="White B."/>
            <person name="Walker D."/>
            <person name="Woodward J.R."/>
            <person name="Winckler T."/>
            <person name="Tanaka Y."/>
            <person name="Shaulsky G."/>
            <person name="Schleicher M."/>
            <person name="Weinstock G.M."/>
            <person name="Rosenthal A."/>
            <person name="Cox E.C."/>
            <person name="Chisholm R.L."/>
            <person name="Gibbs R.A."/>
            <person name="Loomis W.F."/>
            <person name="Platzer M."/>
            <person name="Kay R.R."/>
            <person name="Williams J.G."/>
            <person name="Dear P.H."/>
            <person name="Noegel A.A."/>
            <person name="Barrell B.G."/>
            <person name="Kuspa A."/>
        </authorList>
    </citation>
    <scope>NUCLEOTIDE SEQUENCE [LARGE SCALE GENOMIC DNA]</scope>
    <source>
        <strain>AX4</strain>
    </source>
</reference>
<proteinExistence type="inferred from homology"/>
<protein>
    <recommendedName>
        <fullName>Putative lysozyme-like protein</fullName>
    </recommendedName>
</protein>
<gene>
    <name type="primary">alyL</name>
    <name type="ORF">DDB_G0286229</name>
</gene>
<feature type="signal peptide" evidence="1">
    <location>
        <begin position="1"/>
        <end position="17"/>
    </location>
</feature>
<feature type="chain" id="PRO_0000315921" description="Putative lysozyme-like protein">
    <location>
        <begin position="18"/>
        <end position="572"/>
    </location>
</feature>
<feature type="region of interest" description="Disordered" evidence="2">
    <location>
        <begin position="145"/>
        <end position="199"/>
    </location>
</feature>
<feature type="region of interest" description="Disordered" evidence="2">
    <location>
        <begin position="231"/>
        <end position="297"/>
    </location>
</feature>
<feature type="region of interest" description="Disordered" evidence="2">
    <location>
        <begin position="326"/>
        <end position="388"/>
    </location>
</feature>
<feature type="region of interest" description="Disordered" evidence="2">
    <location>
        <begin position="433"/>
        <end position="469"/>
    </location>
</feature>
<feature type="compositionally biased region" description="Low complexity" evidence="2">
    <location>
        <begin position="145"/>
        <end position="165"/>
    </location>
</feature>
<feature type="compositionally biased region" description="Gly residues" evidence="2">
    <location>
        <begin position="166"/>
        <end position="185"/>
    </location>
</feature>
<feature type="compositionally biased region" description="Low complexity" evidence="2">
    <location>
        <begin position="231"/>
        <end position="240"/>
    </location>
</feature>
<feature type="compositionally biased region" description="Gly residues" evidence="2">
    <location>
        <begin position="258"/>
        <end position="282"/>
    </location>
</feature>
<feature type="compositionally biased region" description="Low complexity" evidence="2">
    <location>
        <begin position="326"/>
        <end position="358"/>
    </location>
</feature>
<feature type="compositionally biased region" description="Gly residues" evidence="2">
    <location>
        <begin position="359"/>
        <end position="382"/>
    </location>
</feature>
<feature type="compositionally biased region" description="Low complexity" evidence="2">
    <location>
        <begin position="433"/>
        <end position="452"/>
    </location>
</feature>
<feature type="compositionally biased region" description="Gly residues" evidence="2">
    <location>
        <begin position="453"/>
        <end position="469"/>
    </location>
</feature>